<reference key="1">
    <citation type="journal article" date="2013" name="Nat. Commun.">
        <title>The genome of Mesobuthus martensii reveals a unique adaptation model of arthropods.</title>
        <authorList>
            <person name="Cao Z."/>
            <person name="Yu Y."/>
            <person name="Wu Y."/>
            <person name="Hao P."/>
            <person name="Di Z."/>
            <person name="He Y."/>
            <person name="Chen Z."/>
            <person name="Yang W."/>
            <person name="Shen Z."/>
            <person name="He X."/>
            <person name="Sheng J."/>
            <person name="Xu X."/>
            <person name="Pan B."/>
            <person name="Feng J."/>
            <person name="Yang X."/>
            <person name="Hong W."/>
            <person name="Zhao W."/>
            <person name="Li Z."/>
            <person name="Huang K."/>
            <person name="Li T."/>
            <person name="Kong Y."/>
            <person name="Liu H."/>
            <person name="Jiang D."/>
            <person name="Zhang B."/>
            <person name="Hu J."/>
            <person name="Hu Y."/>
            <person name="Wang B."/>
            <person name="Dai J."/>
            <person name="Yuan B."/>
            <person name="Feng Y."/>
            <person name="Huang W."/>
            <person name="Xing X."/>
            <person name="Zhao G."/>
            <person name="Li X."/>
            <person name="Li Y."/>
            <person name="Li W."/>
        </authorList>
    </citation>
    <scope>NUCLEOTIDE SEQUENCE [LARGE SCALE GENOMIC DNA]</scope>
    <source>
        <tissue>Muscle</tissue>
    </source>
</reference>
<sequence>MKVIAILFLLAFVLCTMEITMVEAGFGCPLFQFACDSHCRGMGRKGGYCGGNFKLTCICVVK</sequence>
<feature type="signal peptide" evidence="3">
    <location>
        <begin position="1"/>
        <end position="24"/>
    </location>
</feature>
<feature type="chain" id="PRO_0000455530" description="Defensin BmKDfsin6" evidence="6">
    <location>
        <begin position="25"/>
        <end position="62"/>
    </location>
</feature>
<feature type="disulfide bond" evidence="1">
    <location>
        <begin position="28"/>
        <end position="49"/>
    </location>
</feature>
<feature type="disulfide bond" evidence="1">
    <location>
        <begin position="35"/>
        <end position="57"/>
    </location>
</feature>
<feature type="disulfide bond" evidence="1">
    <location>
        <begin position="39"/>
        <end position="59"/>
    </location>
</feature>
<protein>
    <recommendedName>
        <fullName evidence="5">Defensin BmKDfsin6</fullName>
    </recommendedName>
</protein>
<proteinExistence type="inferred from homology"/>
<comment type="function">
    <text evidence="1 2">Antibacterial peptide active against Gram-positive bacteria, but not on Gram-negative bacteria (By similarity). Also has weak blocking activity on Kv1.1/KCNA1, Kv1.2/KCNA2, Kv1.3/KCNA3, KCa3.1/KCNN4/IK, KCa2.3/KCNN3/SK3 and Kv11.1/KCNH2/ERG1 channels (tested at 1 uM) (By similarity). It inhibits potassium channel current by interacting with the pore region (By similarity).</text>
</comment>
<comment type="subcellular location">
    <subcellularLocation>
        <location evidence="6">Secreted</location>
    </subcellularLocation>
</comment>
<comment type="tissue specificity">
    <text evidence="2">Highly expressed in non-venom gland (hemolymph) and moderately expressed in venom gland.</text>
</comment>
<comment type="similarity">
    <text evidence="4">Belongs to the invertebrate defensin family. Type 2 subfamily.</text>
</comment>
<evidence type="ECO:0000250" key="1">
    <source>
        <dbReference type="UniProtKB" id="A0A384E0Y8"/>
    </source>
</evidence>
<evidence type="ECO:0000250" key="2">
    <source>
        <dbReference type="UniProtKB" id="P0DQU0"/>
    </source>
</evidence>
<evidence type="ECO:0000255" key="3"/>
<evidence type="ECO:0000255" key="4">
    <source>
        <dbReference type="PROSITE-ProRule" id="PRU00710"/>
    </source>
</evidence>
<evidence type="ECO:0000303" key="5">
    <source>
    </source>
</evidence>
<evidence type="ECO:0000305" key="6">
    <source>
    </source>
</evidence>
<keyword id="KW-0044">Antibiotic</keyword>
<keyword id="KW-0929">Antimicrobial</keyword>
<keyword id="KW-1221">Calcium-activated potassium channel impairing toxin</keyword>
<keyword id="KW-0211">Defensin</keyword>
<keyword id="KW-1015">Disulfide bond</keyword>
<keyword id="KW-0391">Immunity</keyword>
<keyword id="KW-0399">Innate immunity</keyword>
<keyword id="KW-0872">Ion channel impairing toxin</keyword>
<keyword id="KW-0632">Potassium channel impairing toxin</keyword>
<keyword id="KW-0964">Secreted</keyword>
<keyword id="KW-0732">Signal</keyword>
<keyword id="KW-0800">Toxin</keyword>
<keyword id="KW-1220">Voltage-gated potassium channel impairing toxin</keyword>
<name>DEF6_OLIMR</name>
<accession>P0DQU1</accession>
<organism>
    <name type="scientific">Olivierus martensii</name>
    <name type="common">Manchurian scorpion</name>
    <name type="synonym">Mesobuthus martensii</name>
    <dbReference type="NCBI Taxonomy" id="34649"/>
    <lineage>
        <taxon>Eukaryota</taxon>
        <taxon>Metazoa</taxon>
        <taxon>Ecdysozoa</taxon>
        <taxon>Arthropoda</taxon>
        <taxon>Chelicerata</taxon>
        <taxon>Arachnida</taxon>
        <taxon>Scorpiones</taxon>
        <taxon>Buthida</taxon>
        <taxon>Buthoidea</taxon>
        <taxon>Buthidae</taxon>
        <taxon>Olivierus</taxon>
    </lineage>
</organism>
<dbReference type="SMR" id="P0DQU1"/>
<dbReference type="GO" id="GO:0005576">
    <property type="term" value="C:extracellular region"/>
    <property type="evidence" value="ECO:0007669"/>
    <property type="project" value="UniProtKB-SubCell"/>
</dbReference>
<dbReference type="GO" id="GO:0015459">
    <property type="term" value="F:potassium channel regulator activity"/>
    <property type="evidence" value="ECO:0007669"/>
    <property type="project" value="UniProtKB-KW"/>
</dbReference>
<dbReference type="GO" id="GO:0090729">
    <property type="term" value="F:toxin activity"/>
    <property type="evidence" value="ECO:0007669"/>
    <property type="project" value="UniProtKB-KW"/>
</dbReference>
<dbReference type="GO" id="GO:0042742">
    <property type="term" value="P:defense response to bacterium"/>
    <property type="evidence" value="ECO:0007669"/>
    <property type="project" value="UniProtKB-KW"/>
</dbReference>
<dbReference type="GO" id="GO:0045087">
    <property type="term" value="P:innate immune response"/>
    <property type="evidence" value="ECO:0007669"/>
    <property type="project" value="UniProtKB-KW"/>
</dbReference>
<dbReference type="Gene3D" id="3.30.30.10">
    <property type="entry name" value="Knottin, scorpion toxin-like"/>
    <property type="match status" value="1"/>
</dbReference>
<dbReference type="InterPro" id="IPR001542">
    <property type="entry name" value="Defensin_invertebrate/fungal"/>
</dbReference>
<dbReference type="InterPro" id="IPR036574">
    <property type="entry name" value="Scorpion_toxin-like_sf"/>
</dbReference>
<dbReference type="Pfam" id="PF01097">
    <property type="entry name" value="Defensin_2"/>
    <property type="match status" value="1"/>
</dbReference>
<dbReference type="SUPFAM" id="SSF57095">
    <property type="entry name" value="Scorpion toxin-like"/>
    <property type="match status" value="1"/>
</dbReference>
<dbReference type="PROSITE" id="PS51378">
    <property type="entry name" value="INVERT_DEFENSINS"/>
    <property type="match status" value="1"/>
</dbReference>